<comment type="function">
    <text evidence="1">S-adenosyl-L-methionine-dependent methyltransferase that catalyzes the trimethylation of the amino group of the modified target histidine residue in translation elongation factor 2 (EF-2), to form an intermediate called diphthine. The three successive methylation reactions represent the second step of diphthamide biosynthesis.</text>
</comment>
<comment type="catalytic activity">
    <reaction evidence="1">
        <text>2-[(3S)-amino-3-carboxypropyl]-L-histidyl-[translation elongation factor 2] + 3 S-adenosyl-L-methionine = diphthine-[translation elongation factor 2] + 3 S-adenosyl-L-homocysteine + 3 H(+)</text>
        <dbReference type="Rhea" id="RHEA:36415"/>
        <dbReference type="Rhea" id="RHEA-COMP:9749"/>
        <dbReference type="Rhea" id="RHEA-COMP:10172"/>
        <dbReference type="ChEBI" id="CHEBI:15378"/>
        <dbReference type="ChEBI" id="CHEBI:57856"/>
        <dbReference type="ChEBI" id="CHEBI:59789"/>
        <dbReference type="ChEBI" id="CHEBI:73995"/>
        <dbReference type="ChEBI" id="CHEBI:82696"/>
        <dbReference type="EC" id="2.1.1.98"/>
    </reaction>
</comment>
<comment type="pathway">
    <text evidence="1">Protein modification; peptidyl-diphthamide biosynthesis.</text>
</comment>
<comment type="subunit">
    <text evidence="1">Homodimer.</text>
</comment>
<comment type="similarity">
    <text evidence="1">Belongs to the diphthine synthase family.</text>
</comment>
<name>DPHB_HALS3</name>
<protein>
    <recommendedName>
        <fullName evidence="1">Diphthine synthase</fullName>
        <ecNumber evidence="1">2.1.1.98</ecNumber>
    </recommendedName>
    <alternativeName>
        <fullName evidence="1">Diphthamide biosynthesis methyltransferase</fullName>
    </alternativeName>
</protein>
<feature type="chain" id="PRO_1000136875" description="Diphthine synthase">
    <location>
        <begin position="1"/>
        <end position="260"/>
    </location>
</feature>
<feature type="binding site" evidence="1">
    <location>
        <position position="9"/>
    </location>
    <ligand>
        <name>S-adenosyl-L-methionine</name>
        <dbReference type="ChEBI" id="CHEBI:59789"/>
    </ligand>
</feature>
<feature type="binding site" evidence="1">
    <location>
        <position position="85"/>
    </location>
    <ligand>
        <name>S-adenosyl-L-methionine</name>
        <dbReference type="ChEBI" id="CHEBI:59789"/>
    </ligand>
</feature>
<feature type="binding site" evidence="1">
    <location>
        <position position="88"/>
    </location>
    <ligand>
        <name>S-adenosyl-L-methionine</name>
        <dbReference type="ChEBI" id="CHEBI:59789"/>
    </ligand>
</feature>
<feature type="binding site" evidence="1">
    <location>
        <begin position="113"/>
        <end position="114"/>
    </location>
    <ligand>
        <name>S-adenosyl-L-methionine</name>
        <dbReference type="ChEBI" id="CHEBI:59789"/>
    </ligand>
</feature>
<feature type="binding site" evidence="1">
    <location>
        <position position="168"/>
    </location>
    <ligand>
        <name>S-adenosyl-L-methionine</name>
        <dbReference type="ChEBI" id="CHEBI:59789"/>
    </ligand>
</feature>
<feature type="binding site" evidence="1">
    <location>
        <position position="208"/>
    </location>
    <ligand>
        <name>S-adenosyl-L-methionine</name>
        <dbReference type="ChEBI" id="CHEBI:59789"/>
    </ligand>
</feature>
<feature type="binding site" evidence="1">
    <location>
        <position position="233"/>
    </location>
    <ligand>
        <name>S-adenosyl-L-methionine</name>
        <dbReference type="ChEBI" id="CHEBI:59789"/>
    </ligand>
</feature>
<reference key="1">
    <citation type="journal article" date="2008" name="Genomics">
        <title>Evolution in the laboratory: the genome of Halobacterium salinarum strain R1 compared to that of strain NRC-1.</title>
        <authorList>
            <person name="Pfeiffer F."/>
            <person name="Schuster S.C."/>
            <person name="Broicher A."/>
            <person name="Falb M."/>
            <person name="Palm P."/>
            <person name="Rodewald K."/>
            <person name="Ruepp A."/>
            <person name="Soppa J."/>
            <person name="Tittor J."/>
            <person name="Oesterhelt D."/>
        </authorList>
    </citation>
    <scope>NUCLEOTIDE SEQUENCE [LARGE SCALE GENOMIC DNA]</scope>
    <source>
        <strain>ATCC 29341 / DSM 671 / R1</strain>
    </source>
</reference>
<keyword id="KW-0489">Methyltransferase</keyword>
<keyword id="KW-0949">S-adenosyl-L-methionine</keyword>
<keyword id="KW-0808">Transferase</keyword>
<organism>
    <name type="scientific">Halobacterium salinarum (strain ATCC 29341 / DSM 671 / R1)</name>
    <dbReference type="NCBI Taxonomy" id="478009"/>
    <lineage>
        <taxon>Archaea</taxon>
        <taxon>Methanobacteriati</taxon>
        <taxon>Methanobacteriota</taxon>
        <taxon>Stenosarchaea group</taxon>
        <taxon>Halobacteria</taxon>
        <taxon>Halobacteriales</taxon>
        <taxon>Halobacteriaceae</taxon>
        <taxon>Halobacterium</taxon>
        <taxon>Halobacterium salinarum NRC-34001</taxon>
    </lineage>
</organism>
<sequence length="260" mass="27346">MLTFVGLGLYDEASVTVAGRDAIAAADRVFAEFYTSRLIGTDVAALEAHHDTTIERRDRAGVEQHPEPILDAAADGDAVFLTAGDTMISTTHVDLRMRAADRGIDTRVIHAPTAASAAAGLTGLQNYRFGKATTLPFPWAHGADGVPGSVTDTIEANRERGLHTLVYLDIKVDHPRVDGDAYMTASQAADLLATNWDADALGVVVARAGAPDATVRADRLGALADADFGSPLHLLVVPGSLHHIERDALRELAGAPADAL</sequence>
<dbReference type="EC" id="2.1.1.98" evidence="1"/>
<dbReference type="EMBL" id="AM774415">
    <property type="protein sequence ID" value="CAP13784.1"/>
    <property type="molecule type" value="Genomic_DNA"/>
</dbReference>
<dbReference type="SMR" id="B0R4W9"/>
<dbReference type="EnsemblBacteria" id="CAP13784">
    <property type="protein sequence ID" value="CAP13784"/>
    <property type="gene ID" value="OE_2613R"/>
</dbReference>
<dbReference type="KEGG" id="hsl:OE_2613R"/>
<dbReference type="HOGENOM" id="CLU_066040_0_0_2"/>
<dbReference type="PhylomeDB" id="B0R4W9"/>
<dbReference type="UniPathway" id="UPA00559"/>
<dbReference type="Proteomes" id="UP000001321">
    <property type="component" value="Chromosome"/>
</dbReference>
<dbReference type="GO" id="GO:0004164">
    <property type="term" value="F:diphthine synthase activity"/>
    <property type="evidence" value="ECO:0007669"/>
    <property type="project" value="UniProtKB-UniRule"/>
</dbReference>
<dbReference type="GO" id="GO:0032259">
    <property type="term" value="P:methylation"/>
    <property type="evidence" value="ECO:0007669"/>
    <property type="project" value="UniProtKB-KW"/>
</dbReference>
<dbReference type="GO" id="GO:0017183">
    <property type="term" value="P:protein histidyl modification to diphthamide"/>
    <property type="evidence" value="ECO:0007669"/>
    <property type="project" value="UniProtKB-UniRule"/>
</dbReference>
<dbReference type="CDD" id="cd11647">
    <property type="entry name" value="DHP5_DphB"/>
    <property type="match status" value="1"/>
</dbReference>
<dbReference type="Gene3D" id="3.40.1010.10">
    <property type="entry name" value="Cobalt-precorrin-4 Transmethylase, Domain 1"/>
    <property type="match status" value="1"/>
</dbReference>
<dbReference type="Gene3D" id="3.30.950.10">
    <property type="entry name" value="Methyltransferase, Cobalt-precorrin-4 Transmethylase, Domain 2"/>
    <property type="match status" value="1"/>
</dbReference>
<dbReference type="HAMAP" id="MF_01084">
    <property type="entry name" value="Diphthine_synth"/>
    <property type="match status" value="1"/>
</dbReference>
<dbReference type="InterPro" id="IPR000878">
    <property type="entry name" value="4pyrrol_Mease"/>
</dbReference>
<dbReference type="InterPro" id="IPR035996">
    <property type="entry name" value="4pyrrol_Methylase_sf"/>
</dbReference>
<dbReference type="InterPro" id="IPR014777">
    <property type="entry name" value="4pyrrole_Mease_sub1"/>
</dbReference>
<dbReference type="InterPro" id="IPR014776">
    <property type="entry name" value="4pyrrole_Mease_sub2"/>
</dbReference>
<dbReference type="InterPro" id="IPR004551">
    <property type="entry name" value="Dphthn_synthase"/>
</dbReference>
<dbReference type="NCBIfam" id="TIGR00522">
    <property type="entry name" value="dph5"/>
    <property type="match status" value="1"/>
</dbReference>
<dbReference type="PANTHER" id="PTHR10882:SF0">
    <property type="entry name" value="DIPHTHINE METHYL ESTER SYNTHASE"/>
    <property type="match status" value="1"/>
</dbReference>
<dbReference type="PANTHER" id="PTHR10882">
    <property type="entry name" value="DIPHTHINE SYNTHASE"/>
    <property type="match status" value="1"/>
</dbReference>
<dbReference type="Pfam" id="PF00590">
    <property type="entry name" value="TP_methylase"/>
    <property type="match status" value="1"/>
</dbReference>
<dbReference type="PIRSF" id="PIRSF036432">
    <property type="entry name" value="Diphthine_synth"/>
    <property type="match status" value="1"/>
</dbReference>
<dbReference type="SUPFAM" id="SSF53790">
    <property type="entry name" value="Tetrapyrrole methylase"/>
    <property type="match status" value="1"/>
</dbReference>
<accession>B0R4W9</accession>
<evidence type="ECO:0000255" key="1">
    <source>
        <dbReference type="HAMAP-Rule" id="MF_01084"/>
    </source>
</evidence>
<gene>
    <name evidence="1" type="primary">dphB</name>
    <name type="ordered locus">OE_2613R</name>
</gene>
<proteinExistence type="inferred from homology"/>